<gene>
    <name evidence="1" type="primary">rph</name>
    <name type="ordered locus">NGK_0838</name>
</gene>
<accession>B4RL28</accession>
<keyword id="KW-0548">Nucleotidyltransferase</keyword>
<keyword id="KW-0694">RNA-binding</keyword>
<keyword id="KW-0698">rRNA processing</keyword>
<keyword id="KW-0808">Transferase</keyword>
<keyword id="KW-0819">tRNA processing</keyword>
<keyword id="KW-0820">tRNA-binding</keyword>
<evidence type="ECO:0000255" key="1">
    <source>
        <dbReference type="HAMAP-Rule" id="MF_00564"/>
    </source>
</evidence>
<dbReference type="EC" id="2.7.7.56" evidence="1"/>
<dbReference type="EMBL" id="CP001050">
    <property type="protein sequence ID" value="ACF29519.1"/>
    <property type="molecule type" value="Genomic_DNA"/>
</dbReference>
<dbReference type="RefSeq" id="WP_003688342.1">
    <property type="nucleotide sequence ID" value="NC_011035.1"/>
</dbReference>
<dbReference type="SMR" id="B4RL28"/>
<dbReference type="GeneID" id="66753281"/>
<dbReference type="KEGG" id="ngk:NGK_0838"/>
<dbReference type="HOGENOM" id="CLU_050858_0_0_4"/>
<dbReference type="Proteomes" id="UP000002564">
    <property type="component" value="Chromosome"/>
</dbReference>
<dbReference type="GO" id="GO:0000175">
    <property type="term" value="F:3'-5'-RNA exonuclease activity"/>
    <property type="evidence" value="ECO:0007669"/>
    <property type="project" value="UniProtKB-UniRule"/>
</dbReference>
<dbReference type="GO" id="GO:0000049">
    <property type="term" value="F:tRNA binding"/>
    <property type="evidence" value="ECO:0007669"/>
    <property type="project" value="UniProtKB-UniRule"/>
</dbReference>
<dbReference type="GO" id="GO:0009022">
    <property type="term" value="F:tRNA nucleotidyltransferase activity"/>
    <property type="evidence" value="ECO:0007669"/>
    <property type="project" value="UniProtKB-UniRule"/>
</dbReference>
<dbReference type="GO" id="GO:0016075">
    <property type="term" value="P:rRNA catabolic process"/>
    <property type="evidence" value="ECO:0007669"/>
    <property type="project" value="UniProtKB-UniRule"/>
</dbReference>
<dbReference type="GO" id="GO:0006364">
    <property type="term" value="P:rRNA processing"/>
    <property type="evidence" value="ECO:0007669"/>
    <property type="project" value="UniProtKB-KW"/>
</dbReference>
<dbReference type="GO" id="GO:0008033">
    <property type="term" value="P:tRNA processing"/>
    <property type="evidence" value="ECO:0007669"/>
    <property type="project" value="UniProtKB-UniRule"/>
</dbReference>
<dbReference type="CDD" id="cd11362">
    <property type="entry name" value="RNase_PH_bact"/>
    <property type="match status" value="1"/>
</dbReference>
<dbReference type="FunFam" id="3.30.230.70:FF:000003">
    <property type="entry name" value="Ribonuclease PH"/>
    <property type="match status" value="1"/>
</dbReference>
<dbReference type="Gene3D" id="3.30.230.70">
    <property type="entry name" value="GHMP Kinase, N-terminal domain"/>
    <property type="match status" value="1"/>
</dbReference>
<dbReference type="HAMAP" id="MF_00564">
    <property type="entry name" value="RNase_PH"/>
    <property type="match status" value="1"/>
</dbReference>
<dbReference type="InterPro" id="IPR001247">
    <property type="entry name" value="ExoRNase_PH_dom1"/>
</dbReference>
<dbReference type="InterPro" id="IPR015847">
    <property type="entry name" value="ExoRNase_PH_dom2"/>
</dbReference>
<dbReference type="InterPro" id="IPR036345">
    <property type="entry name" value="ExoRNase_PH_dom2_sf"/>
</dbReference>
<dbReference type="InterPro" id="IPR027408">
    <property type="entry name" value="PNPase/RNase_PH_dom_sf"/>
</dbReference>
<dbReference type="InterPro" id="IPR020568">
    <property type="entry name" value="Ribosomal_Su5_D2-typ_SF"/>
</dbReference>
<dbReference type="InterPro" id="IPR050080">
    <property type="entry name" value="RNase_PH"/>
</dbReference>
<dbReference type="InterPro" id="IPR002381">
    <property type="entry name" value="RNase_PH_bac-type"/>
</dbReference>
<dbReference type="InterPro" id="IPR018336">
    <property type="entry name" value="RNase_PH_CS"/>
</dbReference>
<dbReference type="NCBIfam" id="TIGR01966">
    <property type="entry name" value="RNasePH"/>
    <property type="match status" value="1"/>
</dbReference>
<dbReference type="PANTHER" id="PTHR11953">
    <property type="entry name" value="EXOSOME COMPLEX COMPONENT"/>
    <property type="match status" value="1"/>
</dbReference>
<dbReference type="PANTHER" id="PTHR11953:SF0">
    <property type="entry name" value="EXOSOME COMPLEX COMPONENT RRP41"/>
    <property type="match status" value="1"/>
</dbReference>
<dbReference type="Pfam" id="PF01138">
    <property type="entry name" value="RNase_PH"/>
    <property type="match status" value="1"/>
</dbReference>
<dbReference type="Pfam" id="PF03725">
    <property type="entry name" value="RNase_PH_C"/>
    <property type="match status" value="1"/>
</dbReference>
<dbReference type="SUPFAM" id="SSF55666">
    <property type="entry name" value="Ribonuclease PH domain 2-like"/>
    <property type="match status" value="1"/>
</dbReference>
<dbReference type="SUPFAM" id="SSF54211">
    <property type="entry name" value="Ribosomal protein S5 domain 2-like"/>
    <property type="match status" value="1"/>
</dbReference>
<dbReference type="PROSITE" id="PS01277">
    <property type="entry name" value="RIBONUCLEASE_PH"/>
    <property type="match status" value="1"/>
</dbReference>
<organism>
    <name type="scientific">Neisseria gonorrhoeae (strain NCCP11945)</name>
    <dbReference type="NCBI Taxonomy" id="521006"/>
    <lineage>
        <taxon>Bacteria</taxon>
        <taxon>Pseudomonadati</taxon>
        <taxon>Pseudomonadota</taxon>
        <taxon>Betaproteobacteria</taxon>
        <taxon>Neisseriales</taxon>
        <taxon>Neisseriaceae</taxon>
        <taxon>Neisseria</taxon>
    </lineage>
</organism>
<reference key="1">
    <citation type="journal article" date="2008" name="J. Bacteriol.">
        <title>Complete genome sequence of Neisseria gonorrhoeae NCCP11945.</title>
        <authorList>
            <person name="Chung G.T."/>
            <person name="Yoo J.S."/>
            <person name="Oh H.B."/>
            <person name="Lee Y.S."/>
            <person name="Cha S.H."/>
            <person name="Kim S.J."/>
            <person name="Yoo C.K."/>
        </authorList>
    </citation>
    <scope>NUCLEOTIDE SEQUENCE [LARGE SCALE GENOMIC DNA]</scope>
    <source>
        <strain>NCCP11945</strain>
    </source>
</reference>
<name>RNPH_NEIG2</name>
<comment type="function">
    <text evidence="1">Phosphorolytic 3'-5' exoribonuclease that plays an important role in tRNA 3'-end maturation. Removes nucleotide residues following the 3'-CCA terminus of tRNAs; can also add nucleotides to the ends of RNA molecules by using nucleoside diphosphates as substrates, but this may not be physiologically important. Probably plays a role in initiation of 16S rRNA degradation (leading to ribosome degradation) during starvation.</text>
</comment>
<comment type="catalytic activity">
    <reaction evidence="1">
        <text>tRNA(n+1) + phosphate = tRNA(n) + a ribonucleoside 5'-diphosphate</text>
        <dbReference type="Rhea" id="RHEA:10628"/>
        <dbReference type="Rhea" id="RHEA-COMP:17343"/>
        <dbReference type="Rhea" id="RHEA-COMP:17344"/>
        <dbReference type="ChEBI" id="CHEBI:43474"/>
        <dbReference type="ChEBI" id="CHEBI:57930"/>
        <dbReference type="ChEBI" id="CHEBI:173114"/>
        <dbReference type="EC" id="2.7.7.56"/>
    </reaction>
</comment>
<comment type="subunit">
    <text evidence="1">Homohexameric ring arranged as a trimer of dimers.</text>
</comment>
<comment type="similarity">
    <text evidence="1">Belongs to the RNase PH family.</text>
</comment>
<feature type="chain" id="PRO_1000129354" description="Ribonuclease PH">
    <location>
        <begin position="1"/>
        <end position="242"/>
    </location>
</feature>
<feature type="binding site" evidence="1">
    <location>
        <position position="89"/>
    </location>
    <ligand>
        <name>phosphate</name>
        <dbReference type="ChEBI" id="CHEBI:43474"/>
        <note>substrate</note>
    </ligand>
</feature>
<feature type="binding site" evidence="1">
    <location>
        <begin position="127"/>
        <end position="129"/>
    </location>
    <ligand>
        <name>phosphate</name>
        <dbReference type="ChEBI" id="CHEBI:43474"/>
        <note>substrate</note>
    </ligand>
</feature>
<sequence>MPDYIRTSRAADSLRDIKITPHFLPHTDGSCLIECGNTKVICTASVDENAPPFLHGKNQGWVTAEYGMLPASTALRMRREASAGKQSGRTQEIQRLIGRSLRAVVDMEKLGERQILIDCDVIQADGGTRTASITGAFVALQIAVGKLVSDGILSENPILEAVAAVSAGVVNGVPLLDLDYPEDSGCDSDVNIVMTASGKIIEIQGTAEGAPFSLDELGKLVALAQKGIGELLRYQQNALSVA</sequence>
<protein>
    <recommendedName>
        <fullName evidence="1">Ribonuclease PH</fullName>
        <shortName evidence="1">RNase PH</shortName>
        <ecNumber evidence="1">2.7.7.56</ecNumber>
    </recommendedName>
    <alternativeName>
        <fullName evidence="1">tRNA nucleotidyltransferase</fullName>
    </alternativeName>
</protein>
<proteinExistence type="inferred from homology"/>